<accession>Q1C6R3</accession>
<reference key="1">
    <citation type="journal article" date="2006" name="J. Bacteriol.">
        <title>Complete genome sequence of Yersinia pestis strains Antiqua and Nepal516: evidence of gene reduction in an emerging pathogen.</title>
        <authorList>
            <person name="Chain P.S.G."/>
            <person name="Hu P."/>
            <person name="Malfatti S.A."/>
            <person name="Radnedge L."/>
            <person name="Larimer F."/>
            <person name="Vergez L.M."/>
            <person name="Worsham P."/>
            <person name="Chu M.C."/>
            <person name="Andersen G.L."/>
        </authorList>
    </citation>
    <scope>NUCLEOTIDE SEQUENCE [LARGE SCALE GENOMIC DNA]</scope>
    <source>
        <strain>Antiqua</strain>
    </source>
</reference>
<feature type="chain" id="PRO_0000274028" description="Peptidase T">
    <location>
        <begin position="1"/>
        <end position="411"/>
    </location>
</feature>
<feature type="active site" evidence="1">
    <location>
        <position position="80"/>
    </location>
</feature>
<feature type="active site" description="Proton acceptor" evidence="1">
    <location>
        <position position="173"/>
    </location>
</feature>
<feature type="binding site" evidence="1">
    <location>
        <position position="78"/>
    </location>
    <ligand>
        <name>Zn(2+)</name>
        <dbReference type="ChEBI" id="CHEBI:29105"/>
        <label>1</label>
    </ligand>
</feature>
<feature type="binding site" evidence="1">
    <location>
        <position position="140"/>
    </location>
    <ligand>
        <name>Zn(2+)</name>
        <dbReference type="ChEBI" id="CHEBI:29105"/>
        <label>1</label>
    </ligand>
</feature>
<feature type="binding site" evidence="1">
    <location>
        <position position="140"/>
    </location>
    <ligand>
        <name>Zn(2+)</name>
        <dbReference type="ChEBI" id="CHEBI:29105"/>
        <label>2</label>
    </ligand>
</feature>
<feature type="binding site" evidence="1">
    <location>
        <position position="174"/>
    </location>
    <ligand>
        <name>Zn(2+)</name>
        <dbReference type="ChEBI" id="CHEBI:29105"/>
        <label>2</label>
    </ligand>
</feature>
<feature type="binding site" evidence="1">
    <location>
        <position position="196"/>
    </location>
    <ligand>
        <name>Zn(2+)</name>
        <dbReference type="ChEBI" id="CHEBI:29105"/>
        <label>1</label>
    </ligand>
</feature>
<feature type="binding site" evidence="1">
    <location>
        <position position="379"/>
    </location>
    <ligand>
        <name>Zn(2+)</name>
        <dbReference type="ChEBI" id="CHEBI:29105"/>
        <label>2</label>
    </ligand>
</feature>
<dbReference type="EC" id="3.4.11.4" evidence="1"/>
<dbReference type="EMBL" id="CP000308">
    <property type="protein sequence ID" value="ABG13859.1"/>
    <property type="molecule type" value="Genomic_DNA"/>
</dbReference>
<dbReference type="RefSeq" id="WP_002210920.1">
    <property type="nucleotide sequence ID" value="NZ_CP009906.1"/>
</dbReference>
<dbReference type="SMR" id="Q1C6R3"/>
<dbReference type="MEROPS" id="M20.003"/>
<dbReference type="GeneID" id="57976942"/>
<dbReference type="KEGG" id="ypa:YPA_1893"/>
<dbReference type="Proteomes" id="UP000001971">
    <property type="component" value="Chromosome"/>
</dbReference>
<dbReference type="GO" id="GO:0005829">
    <property type="term" value="C:cytosol"/>
    <property type="evidence" value="ECO:0007669"/>
    <property type="project" value="TreeGrafter"/>
</dbReference>
<dbReference type="GO" id="GO:0008237">
    <property type="term" value="F:metallopeptidase activity"/>
    <property type="evidence" value="ECO:0007669"/>
    <property type="project" value="UniProtKB-KW"/>
</dbReference>
<dbReference type="GO" id="GO:0045148">
    <property type="term" value="F:tripeptide aminopeptidase activity"/>
    <property type="evidence" value="ECO:0007669"/>
    <property type="project" value="UniProtKB-UniRule"/>
</dbReference>
<dbReference type="GO" id="GO:0008270">
    <property type="term" value="F:zinc ion binding"/>
    <property type="evidence" value="ECO:0007669"/>
    <property type="project" value="UniProtKB-UniRule"/>
</dbReference>
<dbReference type="GO" id="GO:0043171">
    <property type="term" value="P:peptide catabolic process"/>
    <property type="evidence" value="ECO:0007669"/>
    <property type="project" value="UniProtKB-UniRule"/>
</dbReference>
<dbReference type="GO" id="GO:0006508">
    <property type="term" value="P:proteolysis"/>
    <property type="evidence" value="ECO:0007669"/>
    <property type="project" value="UniProtKB-UniRule"/>
</dbReference>
<dbReference type="CDD" id="cd03892">
    <property type="entry name" value="M20_peptT"/>
    <property type="match status" value="1"/>
</dbReference>
<dbReference type="FunFam" id="3.30.70.360:FF:000002">
    <property type="entry name" value="Peptidase T"/>
    <property type="match status" value="1"/>
</dbReference>
<dbReference type="Gene3D" id="3.30.70.360">
    <property type="match status" value="1"/>
</dbReference>
<dbReference type="Gene3D" id="3.40.630.10">
    <property type="entry name" value="Zn peptidases"/>
    <property type="match status" value="1"/>
</dbReference>
<dbReference type="HAMAP" id="MF_00550">
    <property type="entry name" value="Aminopeptidase_M20"/>
    <property type="match status" value="1"/>
</dbReference>
<dbReference type="InterPro" id="IPR001261">
    <property type="entry name" value="ArgE/DapE_CS"/>
</dbReference>
<dbReference type="InterPro" id="IPR036264">
    <property type="entry name" value="Bact_exopeptidase_dim_dom"/>
</dbReference>
<dbReference type="InterPro" id="IPR002933">
    <property type="entry name" value="Peptidase_M20"/>
</dbReference>
<dbReference type="InterPro" id="IPR011650">
    <property type="entry name" value="Peptidase_M20_dimer"/>
</dbReference>
<dbReference type="InterPro" id="IPR010161">
    <property type="entry name" value="Peptidase_M20B"/>
</dbReference>
<dbReference type="NCBIfam" id="TIGR01882">
    <property type="entry name" value="peptidase-T"/>
    <property type="match status" value="1"/>
</dbReference>
<dbReference type="NCBIfam" id="NF003976">
    <property type="entry name" value="PRK05469.1"/>
    <property type="match status" value="1"/>
</dbReference>
<dbReference type="NCBIfam" id="NF009920">
    <property type="entry name" value="PRK13381.1"/>
    <property type="match status" value="1"/>
</dbReference>
<dbReference type="PANTHER" id="PTHR42994">
    <property type="entry name" value="PEPTIDASE T"/>
    <property type="match status" value="1"/>
</dbReference>
<dbReference type="PANTHER" id="PTHR42994:SF1">
    <property type="entry name" value="PEPTIDASE T"/>
    <property type="match status" value="1"/>
</dbReference>
<dbReference type="Pfam" id="PF07687">
    <property type="entry name" value="M20_dimer"/>
    <property type="match status" value="1"/>
</dbReference>
<dbReference type="Pfam" id="PF01546">
    <property type="entry name" value="Peptidase_M20"/>
    <property type="match status" value="1"/>
</dbReference>
<dbReference type="PIRSF" id="PIRSF037215">
    <property type="entry name" value="Peptidase_M20B"/>
    <property type="match status" value="1"/>
</dbReference>
<dbReference type="SUPFAM" id="SSF55031">
    <property type="entry name" value="Bacterial exopeptidase dimerisation domain"/>
    <property type="match status" value="1"/>
</dbReference>
<dbReference type="SUPFAM" id="SSF53187">
    <property type="entry name" value="Zn-dependent exopeptidases"/>
    <property type="match status" value="1"/>
</dbReference>
<dbReference type="PROSITE" id="PS00758">
    <property type="entry name" value="ARGE_DAPE_CPG2_1"/>
    <property type="match status" value="1"/>
</dbReference>
<dbReference type="PROSITE" id="PS00759">
    <property type="entry name" value="ARGE_DAPE_CPG2_2"/>
    <property type="match status" value="1"/>
</dbReference>
<sequence length="411" mass="45387">MDKLLDRFFNYVSFDTQAKANVKSVPSTQGQRKLAQALQQELLTLGFSHVTLSDHGCVMATLPANVSWPVPTIGFIAHLDTSPDFSGKNVNPQIVENYRGGDIALGIGDEVLSPVMFPVLHQLLGHTLITTDGKTLLGADDKAGIAEIITAMVRLKHRNVPHGDIRIAFTPDEEVGKGAQFFNVAEFDAQWAYTVDGGGIGELEFENFNAASVAIKIVGNNVHPGSAKGVMVNALSLATRYHQELPVDETPECTEGYDGFYHLQSIKGTVERAEMHYIVRDFNRDSFEARKKNMVDIAKRVGKGLHRDCYIEIVIDDSYYNMREQIIKHPHIIELAQQAMLDCDITPIMKPIRGGTDGAQLSFKGLPCPNIFTGGYNYHGKHEFITLEGMEKAVAVIMRISELTAKRAKES</sequence>
<comment type="function">
    <text evidence="1">Cleaves the N-terminal amino acid of tripeptides.</text>
</comment>
<comment type="catalytic activity">
    <reaction evidence="1">
        <text>Release of the N-terminal residue from a tripeptide.</text>
        <dbReference type="EC" id="3.4.11.4"/>
    </reaction>
</comment>
<comment type="cofactor">
    <cofactor evidence="1">
        <name>Zn(2+)</name>
        <dbReference type="ChEBI" id="CHEBI:29105"/>
    </cofactor>
    <text evidence="1">Binds 2 Zn(2+) ions per subunit.</text>
</comment>
<comment type="subcellular location">
    <subcellularLocation>
        <location evidence="1">Cytoplasm</location>
    </subcellularLocation>
</comment>
<comment type="similarity">
    <text evidence="1">Belongs to the peptidase M20B family.</text>
</comment>
<gene>
    <name evidence="1" type="primary">pepT</name>
    <name type="ordered locus">YPA_1893</name>
</gene>
<organism>
    <name type="scientific">Yersinia pestis bv. Antiqua (strain Antiqua)</name>
    <dbReference type="NCBI Taxonomy" id="360102"/>
    <lineage>
        <taxon>Bacteria</taxon>
        <taxon>Pseudomonadati</taxon>
        <taxon>Pseudomonadota</taxon>
        <taxon>Gammaproteobacteria</taxon>
        <taxon>Enterobacterales</taxon>
        <taxon>Yersiniaceae</taxon>
        <taxon>Yersinia</taxon>
    </lineage>
</organism>
<protein>
    <recommendedName>
        <fullName evidence="1">Peptidase T</fullName>
        <ecNumber evidence="1">3.4.11.4</ecNumber>
    </recommendedName>
    <alternativeName>
        <fullName evidence="1">Aminotripeptidase</fullName>
        <shortName evidence="1">Tripeptidase</shortName>
    </alternativeName>
    <alternativeName>
        <fullName evidence="1">Tripeptide aminopeptidase</fullName>
    </alternativeName>
</protein>
<proteinExistence type="inferred from homology"/>
<keyword id="KW-0031">Aminopeptidase</keyword>
<keyword id="KW-0963">Cytoplasm</keyword>
<keyword id="KW-0378">Hydrolase</keyword>
<keyword id="KW-0479">Metal-binding</keyword>
<keyword id="KW-0482">Metalloprotease</keyword>
<keyword id="KW-0645">Protease</keyword>
<keyword id="KW-0862">Zinc</keyword>
<evidence type="ECO:0000255" key="1">
    <source>
        <dbReference type="HAMAP-Rule" id="MF_00550"/>
    </source>
</evidence>
<name>PEPT_YERPA</name>